<evidence type="ECO:0000255" key="1">
    <source>
        <dbReference type="HAMAP-Rule" id="MF_01588"/>
    </source>
</evidence>
<name>DNLJ_LEPBP</name>
<keyword id="KW-0227">DNA damage</keyword>
<keyword id="KW-0234">DNA repair</keyword>
<keyword id="KW-0235">DNA replication</keyword>
<keyword id="KW-0436">Ligase</keyword>
<keyword id="KW-0460">Magnesium</keyword>
<keyword id="KW-0464">Manganese</keyword>
<keyword id="KW-0479">Metal-binding</keyword>
<keyword id="KW-0520">NAD</keyword>
<keyword id="KW-1185">Reference proteome</keyword>
<keyword id="KW-0862">Zinc</keyword>
<accession>B0SKC1</accession>
<protein>
    <recommendedName>
        <fullName evidence="1">DNA ligase</fullName>
        <ecNumber evidence="1">6.5.1.2</ecNumber>
    </recommendedName>
    <alternativeName>
        <fullName evidence="1">Polydeoxyribonucleotide synthase [NAD(+)]</fullName>
    </alternativeName>
</protein>
<sequence>MAKKTKAEDPKKRIITLRKEIGRHNDLYYKENAPVITDKEFDILVKELQKLESENPDLADVSSPTAQVGSDLSPQFSKFKHKVPVLSLENTYNETELSEWLEKTGIEENYSLEWKIDGASILLYYEKGKLTNCVTRGSGGIGDVVTENVKTISTIPHTLSEEMNLTVRGEIFMTFADFEEFNEEYGGKFANPRNLAAGSIKQKDPLDVAKRPLRIYVYDVYFSSSRKGINTHKDILSLLKKEKFPLAPDTTILTGKKLLREIESFRKKKDKMPFPVDGLVIKLDSLNLRESLGETSHSPRWARAFKFDALLKESTIEEIDFAIGRTGKVTPRAKVTPISLAGTTVTYATLHNQDYINQLGAGIGAKVLISKRGEIIPAVEKVTFPPKTIFVLPNQCPSCNTKLTKVDDSVDFFCTNRHCPERKLNQLIFFCSKKQMNIEGLGERQIQIFFEKGWVKDIPDLYTLEKYKPTLLELDGFGEKSVKIIFDAIEKSKEKDFRFTLPSIGLNEVGPKVTEILIENGYDSWDKLLTLSKSKTANEDLKAIHGIGPRTIEALLTHLKDKETLKLVATLKKLGLKFQADETEKSDLQPFVGQSWCVTGSFENFQPRDLAMDLITKHGGKKVTSVSSKTTHLLYGPGAGSKLDKATELGVKLVTESEFLDLLKQEGIAID</sequence>
<comment type="function">
    <text evidence="1">DNA ligase that catalyzes the formation of phosphodiester linkages between 5'-phosphoryl and 3'-hydroxyl groups in double-stranded DNA using NAD as a coenzyme and as the energy source for the reaction. It is essential for DNA replication and repair of damaged DNA.</text>
</comment>
<comment type="catalytic activity">
    <reaction evidence="1">
        <text>NAD(+) + (deoxyribonucleotide)n-3'-hydroxyl + 5'-phospho-(deoxyribonucleotide)m = (deoxyribonucleotide)n+m + AMP + beta-nicotinamide D-nucleotide.</text>
        <dbReference type="EC" id="6.5.1.2"/>
    </reaction>
</comment>
<comment type="cofactor">
    <cofactor evidence="1">
        <name>Mg(2+)</name>
        <dbReference type="ChEBI" id="CHEBI:18420"/>
    </cofactor>
    <cofactor evidence="1">
        <name>Mn(2+)</name>
        <dbReference type="ChEBI" id="CHEBI:29035"/>
    </cofactor>
</comment>
<comment type="similarity">
    <text evidence="1">Belongs to the NAD-dependent DNA ligase family. LigA subfamily.</text>
</comment>
<feature type="chain" id="PRO_0000380407" description="DNA ligase">
    <location>
        <begin position="1"/>
        <end position="671"/>
    </location>
</feature>
<feature type="domain" description="BRCT" evidence="1">
    <location>
        <begin position="586"/>
        <end position="671"/>
    </location>
</feature>
<feature type="active site" description="N6-AMP-lysine intermediate" evidence="1">
    <location>
        <position position="115"/>
    </location>
</feature>
<feature type="binding site" evidence="1">
    <location>
        <begin position="38"/>
        <end position="42"/>
    </location>
    <ligand>
        <name>NAD(+)</name>
        <dbReference type="ChEBI" id="CHEBI:57540"/>
    </ligand>
</feature>
<feature type="binding site" evidence="1">
    <location>
        <begin position="87"/>
        <end position="88"/>
    </location>
    <ligand>
        <name>NAD(+)</name>
        <dbReference type="ChEBI" id="CHEBI:57540"/>
    </ligand>
</feature>
<feature type="binding site" evidence="1">
    <location>
        <position position="113"/>
    </location>
    <ligand>
        <name>NAD(+)</name>
        <dbReference type="ChEBI" id="CHEBI:57540"/>
    </ligand>
</feature>
<feature type="binding site" evidence="1">
    <location>
        <position position="136"/>
    </location>
    <ligand>
        <name>NAD(+)</name>
        <dbReference type="ChEBI" id="CHEBI:57540"/>
    </ligand>
</feature>
<feature type="binding site" evidence="1">
    <location>
        <position position="170"/>
    </location>
    <ligand>
        <name>NAD(+)</name>
        <dbReference type="ChEBI" id="CHEBI:57540"/>
    </ligand>
</feature>
<feature type="binding site" evidence="1">
    <location>
        <position position="282"/>
    </location>
    <ligand>
        <name>NAD(+)</name>
        <dbReference type="ChEBI" id="CHEBI:57540"/>
    </ligand>
</feature>
<feature type="binding site" evidence="1">
    <location>
        <position position="306"/>
    </location>
    <ligand>
        <name>NAD(+)</name>
        <dbReference type="ChEBI" id="CHEBI:57540"/>
    </ligand>
</feature>
<feature type="binding site" evidence="1">
    <location>
        <position position="396"/>
    </location>
    <ligand>
        <name>Zn(2+)</name>
        <dbReference type="ChEBI" id="CHEBI:29105"/>
    </ligand>
</feature>
<feature type="binding site" evidence="1">
    <location>
        <position position="399"/>
    </location>
    <ligand>
        <name>Zn(2+)</name>
        <dbReference type="ChEBI" id="CHEBI:29105"/>
    </ligand>
</feature>
<feature type="binding site" evidence="1">
    <location>
        <position position="414"/>
    </location>
    <ligand>
        <name>Zn(2+)</name>
        <dbReference type="ChEBI" id="CHEBI:29105"/>
    </ligand>
</feature>
<feature type="binding site" evidence="1">
    <location>
        <position position="419"/>
    </location>
    <ligand>
        <name>Zn(2+)</name>
        <dbReference type="ChEBI" id="CHEBI:29105"/>
    </ligand>
</feature>
<gene>
    <name evidence="1" type="primary">ligA</name>
    <name type="ordered locus">LEPBI_I0217</name>
</gene>
<reference key="1">
    <citation type="journal article" date="2008" name="PLoS ONE">
        <title>Genome sequence of the saprophyte Leptospira biflexa provides insights into the evolution of Leptospira and the pathogenesis of leptospirosis.</title>
        <authorList>
            <person name="Picardeau M."/>
            <person name="Bulach D.M."/>
            <person name="Bouchier C."/>
            <person name="Zuerner R.L."/>
            <person name="Zidane N."/>
            <person name="Wilson P.J."/>
            <person name="Creno S."/>
            <person name="Kuczek E.S."/>
            <person name="Bommezzadri S."/>
            <person name="Davis J.C."/>
            <person name="McGrath A."/>
            <person name="Johnson M.J."/>
            <person name="Boursaux-Eude C."/>
            <person name="Seemann T."/>
            <person name="Rouy Z."/>
            <person name="Coppel R.L."/>
            <person name="Rood J.I."/>
            <person name="Lajus A."/>
            <person name="Davies J.K."/>
            <person name="Medigue C."/>
            <person name="Adler B."/>
        </authorList>
    </citation>
    <scope>NUCLEOTIDE SEQUENCE [LARGE SCALE GENOMIC DNA]</scope>
    <source>
        <strain>Patoc 1 / ATCC 23582 / Paris</strain>
    </source>
</reference>
<organism>
    <name type="scientific">Leptospira biflexa serovar Patoc (strain Patoc 1 / ATCC 23582 / Paris)</name>
    <dbReference type="NCBI Taxonomy" id="456481"/>
    <lineage>
        <taxon>Bacteria</taxon>
        <taxon>Pseudomonadati</taxon>
        <taxon>Spirochaetota</taxon>
        <taxon>Spirochaetia</taxon>
        <taxon>Leptospirales</taxon>
        <taxon>Leptospiraceae</taxon>
        <taxon>Leptospira</taxon>
    </lineage>
</organism>
<dbReference type="EC" id="6.5.1.2" evidence="1"/>
<dbReference type="EMBL" id="CP000786">
    <property type="protein sequence ID" value="ABZ96362.1"/>
    <property type="molecule type" value="Genomic_DNA"/>
</dbReference>
<dbReference type="RefSeq" id="WP_012387250.1">
    <property type="nucleotide sequence ID" value="NC_010602.1"/>
</dbReference>
<dbReference type="SMR" id="B0SKC1"/>
<dbReference type="STRING" id="456481.LEPBI_I0217"/>
<dbReference type="KEGG" id="lbi:LEPBI_I0217"/>
<dbReference type="HOGENOM" id="CLU_007764_2_1_12"/>
<dbReference type="OrthoDB" id="9759736at2"/>
<dbReference type="BioCyc" id="LBIF456481:LEPBI_RS01065-MONOMER"/>
<dbReference type="Proteomes" id="UP000001847">
    <property type="component" value="Chromosome I"/>
</dbReference>
<dbReference type="GO" id="GO:0003677">
    <property type="term" value="F:DNA binding"/>
    <property type="evidence" value="ECO:0007669"/>
    <property type="project" value="InterPro"/>
</dbReference>
<dbReference type="GO" id="GO:0003911">
    <property type="term" value="F:DNA ligase (NAD+) activity"/>
    <property type="evidence" value="ECO:0007669"/>
    <property type="project" value="UniProtKB-UniRule"/>
</dbReference>
<dbReference type="GO" id="GO:0046872">
    <property type="term" value="F:metal ion binding"/>
    <property type="evidence" value="ECO:0007669"/>
    <property type="project" value="UniProtKB-KW"/>
</dbReference>
<dbReference type="GO" id="GO:0006281">
    <property type="term" value="P:DNA repair"/>
    <property type="evidence" value="ECO:0007669"/>
    <property type="project" value="UniProtKB-KW"/>
</dbReference>
<dbReference type="GO" id="GO:0006260">
    <property type="term" value="P:DNA replication"/>
    <property type="evidence" value="ECO:0007669"/>
    <property type="project" value="UniProtKB-KW"/>
</dbReference>
<dbReference type="CDD" id="cd17748">
    <property type="entry name" value="BRCT_DNA_ligase_like"/>
    <property type="match status" value="1"/>
</dbReference>
<dbReference type="CDD" id="cd00114">
    <property type="entry name" value="LIGANc"/>
    <property type="match status" value="1"/>
</dbReference>
<dbReference type="FunFam" id="1.10.150.20:FF:000007">
    <property type="entry name" value="DNA ligase"/>
    <property type="match status" value="1"/>
</dbReference>
<dbReference type="Gene3D" id="6.20.10.30">
    <property type="match status" value="1"/>
</dbReference>
<dbReference type="Gene3D" id="1.10.150.20">
    <property type="entry name" value="5' to 3' exonuclease, C-terminal subdomain"/>
    <property type="match status" value="2"/>
</dbReference>
<dbReference type="Gene3D" id="3.40.50.10190">
    <property type="entry name" value="BRCT domain"/>
    <property type="match status" value="1"/>
</dbReference>
<dbReference type="Gene3D" id="3.30.470.30">
    <property type="entry name" value="DNA ligase/mRNA capping enzyme"/>
    <property type="match status" value="1"/>
</dbReference>
<dbReference type="Gene3D" id="1.10.287.610">
    <property type="entry name" value="Helix hairpin bin"/>
    <property type="match status" value="1"/>
</dbReference>
<dbReference type="Gene3D" id="2.40.50.140">
    <property type="entry name" value="Nucleic acid-binding proteins"/>
    <property type="match status" value="1"/>
</dbReference>
<dbReference type="HAMAP" id="MF_01588">
    <property type="entry name" value="DNA_ligase_A"/>
    <property type="match status" value="1"/>
</dbReference>
<dbReference type="InterPro" id="IPR001357">
    <property type="entry name" value="BRCT_dom"/>
</dbReference>
<dbReference type="InterPro" id="IPR036420">
    <property type="entry name" value="BRCT_dom_sf"/>
</dbReference>
<dbReference type="InterPro" id="IPR001679">
    <property type="entry name" value="DNA_ligase"/>
</dbReference>
<dbReference type="InterPro" id="IPR013839">
    <property type="entry name" value="DNAligase_adenylation"/>
</dbReference>
<dbReference type="InterPro" id="IPR013840">
    <property type="entry name" value="DNAligase_N"/>
</dbReference>
<dbReference type="InterPro" id="IPR003583">
    <property type="entry name" value="Hlx-hairpin-Hlx_DNA-bd_motif"/>
</dbReference>
<dbReference type="InterPro" id="IPR012340">
    <property type="entry name" value="NA-bd_OB-fold"/>
</dbReference>
<dbReference type="InterPro" id="IPR004150">
    <property type="entry name" value="NAD_DNA_ligase_OB"/>
</dbReference>
<dbReference type="InterPro" id="IPR010994">
    <property type="entry name" value="RuvA_2-like"/>
</dbReference>
<dbReference type="InterPro" id="IPR004149">
    <property type="entry name" value="Znf_DNAligase_C4"/>
</dbReference>
<dbReference type="NCBIfam" id="TIGR00575">
    <property type="entry name" value="dnlj"/>
    <property type="match status" value="1"/>
</dbReference>
<dbReference type="NCBIfam" id="NF005932">
    <property type="entry name" value="PRK07956.1"/>
    <property type="match status" value="1"/>
</dbReference>
<dbReference type="Pfam" id="PF00533">
    <property type="entry name" value="BRCT"/>
    <property type="match status" value="1"/>
</dbReference>
<dbReference type="Pfam" id="PF01653">
    <property type="entry name" value="DNA_ligase_aden"/>
    <property type="match status" value="1"/>
</dbReference>
<dbReference type="Pfam" id="PF03120">
    <property type="entry name" value="DNA_ligase_OB"/>
    <property type="match status" value="1"/>
</dbReference>
<dbReference type="Pfam" id="PF03119">
    <property type="entry name" value="DNA_ligase_ZBD"/>
    <property type="match status" value="1"/>
</dbReference>
<dbReference type="Pfam" id="PF14520">
    <property type="entry name" value="HHH_5"/>
    <property type="match status" value="1"/>
</dbReference>
<dbReference type="Pfam" id="PF22745">
    <property type="entry name" value="Nlig-Ia"/>
    <property type="match status" value="1"/>
</dbReference>
<dbReference type="PIRSF" id="PIRSF001604">
    <property type="entry name" value="LigA"/>
    <property type="match status" value="1"/>
</dbReference>
<dbReference type="SMART" id="SM00292">
    <property type="entry name" value="BRCT"/>
    <property type="match status" value="1"/>
</dbReference>
<dbReference type="SMART" id="SM00278">
    <property type="entry name" value="HhH1"/>
    <property type="match status" value="2"/>
</dbReference>
<dbReference type="SMART" id="SM00532">
    <property type="entry name" value="LIGANc"/>
    <property type="match status" value="1"/>
</dbReference>
<dbReference type="SUPFAM" id="SSF52113">
    <property type="entry name" value="BRCT domain"/>
    <property type="match status" value="1"/>
</dbReference>
<dbReference type="SUPFAM" id="SSF56091">
    <property type="entry name" value="DNA ligase/mRNA capping enzyme, catalytic domain"/>
    <property type="match status" value="1"/>
</dbReference>
<dbReference type="SUPFAM" id="SSF50249">
    <property type="entry name" value="Nucleic acid-binding proteins"/>
    <property type="match status" value="1"/>
</dbReference>
<dbReference type="SUPFAM" id="SSF47781">
    <property type="entry name" value="RuvA domain 2-like"/>
    <property type="match status" value="1"/>
</dbReference>
<dbReference type="PROSITE" id="PS50172">
    <property type="entry name" value="BRCT"/>
    <property type="match status" value="1"/>
</dbReference>
<proteinExistence type="inferred from homology"/>